<reference evidence="3 5" key="1">
    <citation type="journal article" date="2005" name="Physiol. Genomics">
        <title>Genomic organization, expression, and function of bitter taste receptors (T2R) in mouse and rat.</title>
        <authorList>
            <person name="Wu S.V."/>
            <person name="Chen M.C."/>
            <person name="Rozengurt E."/>
        </authorList>
    </citation>
    <scope>NUCLEOTIDE SEQUENCE [MRNA]</scope>
    <scope>TISSUE SPECIFICITY</scope>
    <source>
        <strain evidence="2">Sprague-Dawley</strain>
    </source>
</reference>
<reference evidence="4" key="2">
    <citation type="submission" date="2003-08" db="EMBL/GenBank/DDBJ databases">
        <title>Identification of new putative rat taste receptors belonging to the T2R family.</title>
        <authorList>
            <person name="Conte C."/>
            <person name="Ebeling M."/>
            <person name="Marcuz A."/>
            <person name="Andres-Barquin P.J."/>
        </authorList>
    </citation>
    <scope>NUCLEOTIDE SEQUENCE [GENOMIC DNA]</scope>
    <source>
        <strain evidence="4">Sprague-Dawley</strain>
    </source>
</reference>
<name>T2R38_RAT</name>
<accession>Q4VHE7</accession>
<accession>Q67ES4</accession>
<protein>
    <recommendedName>
        <fullName>Taste receptor type 2 member 38</fullName>
        <shortName>T2R38</shortName>
    </recommendedName>
    <alternativeName>
        <fullName>Taste receptor type 2 member 138</fullName>
    </alternativeName>
    <alternativeName>
        <fullName>Taste receptor type 2 member 26</fullName>
        <shortName>T2R26</shortName>
    </alternativeName>
</protein>
<comment type="function">
    <text evidence="3">Putative taste receptor which may play a role in the perception of bitterness.</text>
</comment>
<comment type="subcellular location">
    <subcellularLocation>
        <location evidence="3">Membrane</location>
        <topology evidence="3">Multi-pass membrane protein</topology>
    </subcellularLocation>
</comment>
<comment type="tissue specificity">
    <text evidence="2">Expressed in tongue, stomach and duodenum.</text>
</comment>
<comment type="miscellaneous">
    <text evidence="3">Several bitter taste receptors are expressed in a single taste receptor cell.</text>
</comment>
<comment type="similarity">
    <text evidence="1">Belongs to the G-protein coupled receptor T2R family.</text>
</comment>
<sequence>MLTLTPVLTVSYEAKISFLFLSVVEFAVGIMANAFIVLVNFWDMVKKQPLNNCDIALLCLSITRLFLQGLLLLDAIQLACFQQMKDPLSHNYQAILTLWMSANQVSLWLAACLSLLYCAKIVRFSHTFPLHLASWVSRRFLQMLLVALLFSGVCTALCLWDFFSRSHTVVTSMLHMNNTEFNLQIEKLNFFYSFVFCNVGSVPPSLVFLISSGVLVISLGNHMRTMKSQTRGSRDPSLEAHVRAIIFLVSFLCFYVVSFCAALISIPLLVLWHNKGGVMVCIGMMAACPSGHAAILISGNAKLKKVIVTILFWFQSRQKVRRVHKVLPRIL</sequence>
<gene>
    <name type="primary">Tas2r38</name>
    <name evidence="6" type="synonym">T2r38</name>
    <name evidence="6" type="synonym">Tas2r138</name>
    <name type="synonym">Tas2r26</name>
</gene>
<proteinExistence type="evidence at transcript level"/>
<dbReference type="EMBL" id="AY916512">
    <property type="protein sequence ID" value="AAX99135.1"/>
    <property type="molecule type" value="mRNA"/>
</dbReference>
<dbReference type="EMBL" id="AY362746">
    <property type="protein sequence ID" value="AAR13355.1"/>
    <property type="molecule type" value="Genomic_DNA"/>
</dbReference>
<dbReference type="RefSeq" id="NP_001019856.1">
    <property type="nucleotide sequence ID" value="NM_001024685.1"/>
</dbReference>
<dbReference type="SMR" id="Q4VHE7"/>
<dbReference type="FunCoup" id="Q4VHE7">
    <property type="interactions" value="86"/>
</dbReference>
<dbReference type="STRING" id="10116.ENSRNOP00000028969"/>
<dbReference type="GlyCosmos" id="Q4VHE7">
    <property type="glycosylation" value="1 site, No reported glycans"/>
</dbReference>
<dbReference type="GlyGen" id="Q4VHE7">
    <property type="glycosylation" value="1 site"/>
</dbReference>
<dbReference type="PhosphoSitePlus" id="Q4VHE7"/>
<dbReference type="PaxDb" id="10116-ENSRNOP00000028969"/>
<dbReference type="GeneID" id="500091"/>
<dbReference type="KEGG" id="rno:500091"/>
<dbReference type="UCSC" id="RGD:1560649">
    <property type="organism name" value="rat"/>
</dbReference>
<dbReference type="AGR" id="RGD:1560649"/>
<dbReference type="CTD" id="387513"/>
<dbReference type="RGD" id="1560649">
    <property type="gene designation" value="Tas2r138"/>
</dbReference>
<dbReference type="eggNOG" id="ENOG502T15G">
    <property type="taxonomic scope" value="Eukaryota"/>
</dbReference>
<dbReference type="InParanoid" id="Q4VHE7"/>
<dbReference type="OrthoDB" id="9533783at2759"/>
<dbReference type="PhylomeDB" id="Q4VHE7"/>
<dbReference type="TreeFam" id="TF335891"/>
<dbReference type="Reactome" id="R-RNO-418594">
    <property type="pathway name" value="G alpha (i) signalling events"/>
</dbReference>
<dbReference type="Reactome" id="R-RNO-420499">
    <property type="pathway name" value="Class C/3 (Metabotropic glutamate/pheromone receptors)"/>
</dbReference>
<dbReference type="Reactome" id="R-RNO-9717207">
    <property type="pathway name" value="Sensory perception of sweet, bitter, and umami (glutamate) taste"/>
</dbReference>
<dbReference type="PRO" id="PR:Q4VHE7"/>
<dbReference type="Proteomes" id="UP000002494">
    <property type="component" value="Unplaced"/>
</dbReference>
<dbReference type="GO" id="GO:0016020">
    <property type="term" value="C:membrane"/>
    <property type="evidence" value="ECO:0000318"/>
    <property type="project" value="GO_Central"/>
</dbReference>
<dbReference type="GO" id="GO:0005886">
    <property type="term" value="C:plasma membrane"/>
    <property type="evidence" value="ECO:0000266"/>
    <property type="project" value="RGD"/>
</dbReference>
<dbReference type="GO" id="GO:0033038">
    <property type="term" value="F:bitter taste receptor activity"/>
    <property type="evidence" value="ECO:0000266"/>
    <property type="project" value="RGD"/>
</dbReference>
<dbReference type="GO" id="GO:0004930">
    <property type="term" value="F:G protein-coupled receptor activity"/>
    <property type="evidence" value="ECO:0007669"/>
    <property type="project" value="UniProtKB-KW"/>
</dbReference>
<dbReference type="GO" id="GO:0001580">
    <property type="term" value="P:detection of chemical stimulus involved in sensory perception of bitter taste"/>
    <property type="evidence" value="ECO:0000266"/>
    <property type="project" value="RGD"/>
</dbReference>
<dbReference type="CDD" id="cd15025">
    <property type="entry name" value="7tm_TAS2R38"/>
    <property type="match status" value="1"/>
</dbReference>
<dbReference type="FunFam" id="1.20.1070.10:FF:000055">
    <property type="entry name" value="Taste receptor type 2"/>
    <property type="match status" value="1"/>
</dbReference>
<dbReference type="Gene3D" id="1.20.1070.10">
    <property type="entry name" value="Rhodopsin 7-helix transmembrane proteins"/>
    <property type="match status" value="1"/>
</dbReference>
<dbReference type="InterPro" id="IPR007960">
    <property type="entry name" value="TAS2R"/>
</dbReference>
<dbReference type="InterPro" id="IPR030050">
    <property type="entry name" value="TAS2R38"/>
</dbReference>
<dbReference type="PANTHER" id="PTHR11394">
    <property type="entry name" value="TASTE RECEPTOR TYPE 2"/>
    <property type="match status" value="1"/>
</dbReference>
<dbReference type="PANTHER" id="PTHR11394:SF52">
    <property type="entry name" value="TASTE RECEPTOR TYPE 2 MEMBER 38"/>
    <property type="match status" value="1"/>
</dbReference>
<dbReference type="Pfam" id="PF05296">
    <property type="entry name" value="TAS2R"/>
    <property type="match status" value="1"/>
</dbReference>
<dbReference type="SUPFAM" id="SSF81321">
    <property type="entry name" value="Family A G protein-coupled receptor-like"/>
    <property type="match status" value="1"/>
</dbReference>
<feature type="chain" id="PRO_0000247657" description="Taste receptor type 2 member 38">
    <location>
        <begin position="1"/>
        <end position="331"/>
    </location>
</feature>
<feature type="topological domain" description="Extracellular" evidence="1">
    <location>
        <begin position="1"/>
        <end position="17"/>
    </location>
</feature>
<feature type="transmembrane region" description="Helical; Name=1" evidence="1">
    <location>
        <begin position="18"/>
        <end position="38"/>
    </location>
</feature>
<feature type="topological domain" description="Cytoplasmic" evidence="1">
    <location>
        <begin position="39"/>
        <end position="54"/>
    </location>
</feature>
<feature type="transmembrane region" description="Helical; Name=2" evidence="1">
    <location>
        <begin position="55"/>
        <end position="75"/>
    </location>
</feature>
<feature type="topological domain" description="Extracellular" evidence="1">
    <location>
        <begin position="76"/>
        <end position="94"/>
    </location>
</feature>
<feature type="transmembrane region" description="Helical; Name=3" evidence="1">
    <location>
        <begin position="95"/>
        <end position="115"/>
    </location>
</feature>
<feature type="topological domain" description="Cytoplasmic" evidence="1">
    <location>
        <begin position="116"/>
        <end position="142"/>
    </location>
</feature>
<feature type="transmembrane region" description="Helical; Name=4" evidence="1">
    <location>
        <begin position="143"/>
        <end position="163"/>
    </location>
</feature>
<feature type="topological domain" description="Extracellular" evidence="1">
    <location>
        <begin position="164"/>
        <end position="198"/>
    </location>
</feature>
<feature type="transmembrane region" description="Helical; Name=5" evidence="1">
    <location>
        <begin position="199"/>
        <end position="219"/>
    </location>
</feature>
<feature type="topological domain" description="Cytoplasmic" evidence="1">
    <location>
        <begin position="220"/>
        <end position="243"/>
    </location>
</feature>
<feature type="transmembrane region" description="Helical; Name=6" evidence="1">
    <location>
        <begin position="244"/>
        <end position="264"/>
    </location>
</feature>
<feature type="topological domain" description="Extracellular" evidence="1">
    <location>
        <begin position="265"/>
        <end position="276"/>
    </location>
</feature>
<feature type="transmembrane region" description="Helical; Name=7" evidence="1">
    <location>
        <begin position="277"/>
        <end position="297"/>
    </location>
</feature>
<feature type="topological domain" description="Cytoplasmic" evidence="1">
    <location>
        <begin position="298"/>
        <end position="331"/>
    </location>
</feature>
<feature type="glycosylation site" description="N-linked (GlcNAc...) asparagine" evidence="1">
    <location>
        <position position="177"/>
    </location>
</feature>
<feature type="sequence conflict" description="In Ref. 2; AAR13355." evidence="3" ref="2">
    <original>S</original>
    <variation>I</variation>
    <location>
        <position position="101"/>
    </location>
</feature>
<evidence type="ECO:0000255" key="1"/>
<evidence type="ECO:0000269" key="2">
    <source>
    </source>
</evidence>
<evidence type="ECO:0000305" key="3"/>
<evidence type="ECO:0000312" key="4">
    <source>
        <dbReference type="EMBL" id="AAR13355.1"/>
    </source>
</evidence>
<evidence type="ECO:0000312" key="5">
    <source>
        <dbReference type="EMBL" id="AAX99135.1"/>
    </source>
</evidence>
<evidence type="ECO:0000312" key="6">
    <source>
        <dbReference type="RGD" id="1560649"/>
    </source>
</evidence>
<organism>
    <name type="scientific">Rattus norvegicus</name>
    <name type="common">Rat</name>
    <dbReference type="NCBI Taxonomy" id="10116"/>
    <lineage>
        <taxon>Eukaryota</taxon>
        <taxon>Metazoa</taxon>
        <taxon>Chordata</taxon>
        <taxon>Craniata</taxon>
        <taxon>Vertebrata</taxon>
        <taxon>Euteleostomi</taxon>
        <taxon>Mammalia</taxon>
        <taxon>Eutheria</taxon>
        <taxon>Euarchontoglires</taxon>
        <taxon>Glires</taxon>
        <taxon>Rodentia</taxon>
        <taxon>Myomorpha</taxon>
        <taxon>Muroidea</taxon>
        <taxon>Muridae</taxon>
        <taxon>Murinae</taxon>
        <taxon>Rattus</taxon>
    </lineage>
</organism>
<keyword id="KW-0297">G-protein coupled receptor</keyword>
<keyword id="KW-0325">Glycoprotein</keyword>
<keyword id="KW-0472">Membrane</keyword>
<keyword id="KW-0675">Receptor</keyword>
<keyword id="KW-1185">Reference proteome</keyword>
<keyword id="KW-0716">Sensory transduction</keyword>
<keyword id="KW-0919">Taste</keyword>
<keyword id="KW-0807">Transducer</keyword>
<keyword id="KW-0812">Transmembrane</keyword>
<keyword id="KW-1133">Transmembrane helix</keyword>